<dbReference type="EMBL" id="AF205062">
    <property type="protein sequence ID" value="AAF74410.1"/>
    <property type="molecule type" value="mRNA"/>
</dbReference>
<dbReference type="EMBL" id="AAFI02000012">
    <property type="protein sequence ID" value="EAL70182.1"/>
    <property type="molecule type" value="Genomic_DNA"/>
</dbReference>
<dbReference type="RefSeq" id="XP_643916.1">
    <property type="nucleotide sequence ID" value="XM_638824.1"/>
</dbReference>
<dbReference type="SMR" id="Q9NCL7"/>
<dbReference type="FunCoup" id="Q9NCL7">
    <property type="interactions" value="192"/>
</dbReference>
<dbReference type="STRING" id="44689.Q9NCL7"/>
<dbReference type="PaxDb" id="44689-DDB0219979"/>
<dbReference type="EnsemblProtists" id="EAL70182">
    <property type="protein sequence ID" value="EAL70182"/>
    <property type="gene ID" value="DDB_G0274579"/>
</dbReference>
<dbReference type="GeneID" id="8619343"/>
<dbReference type="KEGG" id="ddi:DDB_G0274579"/>
<dbReference type="dictyBase" id="DDB_G0274579">
    <property type="gene designation" value="pitB"/>
</dbReference>
<dbReference type="VEuPathDB" id="AmoebaDB:DDB_G0274579"/>
<dbReference type="eggNOG" id="KOG3668">
    <property type="taxonomic scope" value="Eukaryota"/>
</dbReference>
<dbReference type="HOGENOM" id="CLU_046509_3_0_1"/>
<dbReference type="InParanoid" id="Q9NCL7"/>
<dbReference type="OMA" id="QHNVHEL"/>
<dbReference type="PhylomeDB" id="Q9NCL7"/>
<dbReference type="PRO" id="PR:Q9NCL7"/>
<dbReference type="Proteomes" id="UP000002195">
    <property type="component" value="Chromosome 2"/>
</dbReference>
<dbReference type="GO" id="GO:0071944">
    <property type="term" value="C:cell periphery"/>
    <property type="evidence" value="ECO:0000314"/>
    <property type="project" value="dictyBase"/>
</dbReference>
<dbReference type="GO" id="GO:0005737">
    <property type="term" value="C:cytoplasm"/>
    <property type="evidence" value="ECO:0000318"/>
    <property type="project" value="GO_Central"/>
</dbReference>
<dbReference type="GO" id="GO:0005794">
    <property type="term" value="C:Golgi apparatus"/>
    <property type="evidence" value="ECO:0000314"/>
    <property type="project" value="dictyBase"/>
</dbReference>
<dbReference type="GO" id="GO:0031210">
    <property type="term" value="F:phosphatidylcholine binding"/>
    <property type="evidence" value="ECO:0000318"/>
    <property type="project" value="GO_Central"/>
</dbReference>
<dbReference type="GO" id="GO:0008525">
    <property type="term" value="F:phosphatidylcholine transporter activity"/>
    <property type="evidence" value="ECO:0000318"/>
    <property type="project" value="GO_Central"/>
</dbReference>
<dbReference type="GO" id="GO:0035091">
    <property type="term" value="F:phosphatidylinositol binding"/>
    <property type="evidence" value="ECO:0000318"/>
    <property type="project" value="GO_Central"/>
</dbReference>
<dbReference type="GO" id="GO:0008526">
    <property type="term" value="F:phosphatidylinositol transfer activity"/>
    <property type="evidence" value="ECO:0000314"/>
    <property type="project" value="dictyBase"/>
</dbReference>
<dbReference type="CDD" id="cd07815">
    <property type="entry name" value="SRPBCC_PITP"/>
    <property type="match status" value="1"/>
</dbReference>
<dbReference type="FunFam" id="3.30.530.20:FF:000028">
    <property type="entry name" value="Phosphatidylinositol transfer protein 5"/>
    <property type="match status" value="1"/>
</dbReference>
<dbReference type="Gene3D" id="3.30.530.20">
    <property type="match status" value="1"/>
</dbReference>
<dbReference type="InterPro" id="IPR001666">
    <property type="entry name" value="PI_transfer"/>
</dbReference>
<dbReference type="InterPro" id="IPR055261">
    <property type="entry name" value="PI_transfer_N"/>
</dbReference>
<dbReference type="InterPro" id="IPR023393">
    <property type="entry name" value="START-like_dom_sf"/>
</dbReference>
<dbReference type="PANTHER" id="PTHR10658">
    <property type="entry name" value="PHOSPHATIDYLINOSITOL TRANSFER PROTEIN"/>
    <property type="match status" value="1"/>
</dbReference>
<dbReference type="PANTHER" id="PTHR10658:SF81">
    <property type="entry name" value="PROTEIN RETINAL DEGENERATION B"/>
    <property type="match status" value="1"/>
</dbReference>
<dbReference type="Pfam" id="PF02121">
    <property type="entry name" value="IP_trans"/>
    <property type="match status" value="1"/>
</dbReference>
<dbReference type="PRINTS" id="PR00391">
    <property type="entry name" value="PITRANSFER"/>
</dbReference>
<dbReference type="SUPFAM" id="SSF55961">
    <property type="entry name" value="Bet v1-like"/>
    <property type="match status" value="1"/>
</dbReference>
<gene>
    <name type="primary">pitB</name>
    <name type="ORF">DDB_G0274579</name>
</gene>
<evidence type="ECO:0000255" key="1"/>
<evidence type="ECO:0000269" key="2">
    <source>
    </source>
</evidence>
<evidence type="ECO:0000269" key="3">
    <source>
    </source>
</evidence>
<evidence type="ECO:0000305" key="4"/>
<keyword id="KW-0175">Coiled coil</keyword>
<keyword id="KW-0963">Cytoplasm</keyword>
<keyword id="KW-0333">Golgi apparatus</keyword>
<keyword id="KW-0446">Lipid-binding</keyword>
<keyword id="KW-1185">Reference proteome</keyword>
<keyword id="KW-0813">Transport</keyword>
<feature type="chain" id="PRO_0000328407" description="Phosphatidylinositol transfer protein 2">
    <location>
        <begin position="1"/>
        <end position="259"/>
    </location>
</feature>
<feature type="coiled-coil region" evidence="1">
    <location>
        <begin position="231"/>
        <end position="259"/>
    </location>
</feature>
<comment type="function">
    <text>Catalyzes the transfer of PtdIns and phosphatidylcholine between membranes.</text>
</comment>
<comment type="subcellular location">
    <subcellularLocation>
        <location evidence="2">Cytoplasm</location>
    </subcellularLocation>
    <subcellularLocation>
        <location evidence="2">Golgi apparatus</location>
    </subcellularLocation>
</comment>
<comment type="developmental stage">
    <text evidence="3">Expressed during development stage, in prespore cells.</text>
</comment>
<comment type="similarity">
    <text evidence="4">Belongs to the PtdIns transfer protein family. PI transfer class IIA subfamily.</text>
</comment>
<reference key="1">
    <citation type="journal article" date="2000" name="Biochem. J.">
        <title>Purification and cloning of phosphatidylinositol transfer proteins from Dictyostelium discoideum: homologues of both mammalian PITPs and Saccharomyces cerevisiae sec14p are found in the same cell.</title>
        <authorList>
            <person name="Swigart P."/>
            <person name="Insall R."/>
            <person name="Wilkins A."/>
            <person name="Cockcroft S."/>
        </authorList>
    </citation>
    <scope>NUCLEOTIDE SEQUENCE [MRNA]</scope>
    <scope>ACTIVITY AS PHOSPHATIDYLINOSITOL TRANSFER PROTEIN</scope>
    <scope>SUBCELLULAR LOCATION</scope>
    <source>
        <strain>AX3</strain>
    </source>
</reference>
<reference key="2">
    <citation type="journal article" date="2002" name="Nature">
        <title>Sequence and analysis of chromosome 2 of Dictyostelium discoideum.</title>
        <authorList>
            <person name="Gloeckner G."/>
            <person name="Eichinger L."/>
            <person name="Szafranski K."/>
            <person name="Pachebat J.A."/>
            <person name="Bankier A.T."/>
            <person name="Dear P.H."/>
            <person name="Lehmann R."/>
            <person name="Baumgart C."/>
            <person name="Parra G."/>
            <person name="Abril J.F."/>
            <person name="Guigo R."/>
            <person name="Kumpf K."/>
            <person name="Tunggal B."/>
            <person name="Cox E.C."/>
            <person name="Quail M.A."/>
            <person name="Platzer M."/>
            <person name="Rosenthal A."/>
            <person name="Noegel A.A."/>
        </authorList>
    </citation>
    <scope>NUCLEOTIDE SEQUENCE [LARGE SCALE GENOMIC DNA]</scope>
    <source>
        <strain>AX4</strain>
    </source>
</reference>
<reference key="3">
    <citation type="journal article" date="2005" name="Nature">
        <title>The genome of the social amoeba Dictyostelium discoideum.</title>
        <authorList>
            <person name="Eichinger L."/>
            <person name="Pachebat J.A."/>
            <person name="Gloeckner G."/>
            <person name="Rajandream M.A."/>
            <person name="Sucgang R."/>
            <person name="Berriman M."/>
            <person name="Song J."/>
            <person name="Olsen R."/>
            <person name="Szafranski K."/>
            <person name="Xu Q."/>
            <person name="Tunggal B."/>
            <person name="Kummerfeld S."/>
            <person name="Madera M."/>
            <person name="Konfortov B.A."/>
            <person name="Rivero F."/>
            <person name="Bankier A.T."/>
            <person name="Lehmann R."/>
            <person name="Hamlin N."/>
            <person name="Davies R."/>
            <person name="Gaudet P."/>
            <person name="Fey P."/>
            <person name="Pilcher K."/>
            <person name="Chen G."/>
            <person name="Saunders D."/>
            <person name="Sodergren E.J."/>
            <person name="Davis P."/>
            <person name="Kerhornou A."/>
            <person name="Nie X."/>
            <person name="Hall N."/>
            <person name="Anjard C."/>
            <person name="Hemphill L."/>
            <person name="Bason N."/>
            <person name="Farbrother P."/>
            <person name="Desany B."/>
            <person name="Just E."/>
            <person name="Morio T."/>
            <person name="Rost R."/>
            <person name="Churcher C.M."/>
            <person name="Cooper J."/>
            <person name="Haydock S."/>
            <person name="van Driessche N."/>
            <person name="Cronin A."/>
            <person name="Goodhead I."/>
            <person name="Muzny D.M."/>
            <person name="Mourier T."/>
            <person name="Pain A."/>
            <person name="Lu M."/>
            <person name="Harper D."/>
            <person name="Lindsay R."/>
            <person name="Hauser H."/>
            <person name="James K.D."/>
            <person name="Quiles M."/>
            <person name="Madan Babu M."/>
            <person name="Saito T."/>
            <person name="Buchrieser C."/>
            <person name="Wardroper A."/>
            <person name="Felder M."/>
            <person name="Thangavelu M."/>
            <person name="Johnson D."/>
            <person name="Knights A."/>
            <person name="Loulseged H."/>
            <person name="Mungall K.L."/>
            <person name="Oliver K."/>
            <person name="Price C."/>
            <person name="Quail M.A."/>
            <person name="Urushihara H."/>
            <person name="Hernandez J."/>
            <person name="Rabbinowitsch E."/>
            <person name="Steffen D."/>
            <person name="Sanders M."/>
            <person name="Ma J."/>
            <person name="Kohara Y."/>
            <person name="Sharp S."/>
            <person name="Simmonds M.N."/>
            <person name="Spiegler S."/>
            <person name="Tivey A."/>
            <person name="Sugano S."/>
            <person name="White B."/>
            <person name="Walker D."/>
            <person name="Woodward J.R."/>
            <person name="Winckler T."/>
            <person name="Tanaka Y."/>
            <person name="Shaulsky G."/>
            <person name="Schleicher M."/>
            <person name="Weinstock G.M."/>
            <person name="Rosenthal A."/>
            <person name="Cox E.C."/>
            <person name="Chisholm R.L."/>
            <person name="Gibbs R.A."/>
            <person name="Loomis W.F."/>
            <person name="Platzer M."/>
            <person name="Kay R.R."/>
            <person name="Williams J.G."/>
            <person name="Dear P.H."/>
            <person name="Noegel A.A."/>
            <person name="Barrell B.G."/>
            <person name="Kuspa A."/>
        </authorList>
    </citation>
    <scope>NUCLEOTIDE SEQUENCE [LARGE SCALE GENOMIC DNA]</scope>
    <source>
        <strain>AX4</strain>
    </source>
</reference>
<reference key="4">
    <citation type="journal article" date="2003" name="Eukaryot. Cell">
        <title>Changing patterns of gene expression in Dictyostelium prestalk cell subtypes recognized by in situ hybridization with genes from microarray analyses.</title>
        <authorList>
            <person name="Maeda M."/>
            <person name="Sakamoto H."/>
            <person name="Iranfar N."/>
            <person name="Fuller D."/>
            <person name="Maruo T."/>
            <person name="Ogihara S."/>
            <person name="Morio T."/>
            <person name="Urushihara H."/>
            <person name="Tanaka Y."/>
            <person name="Loomis W.F."/>
        </authorList>
    </citation>
    <scope>DEVELOPMENTAL STAGE</scope>
    <source>
        <strain>AX4</strain>
    </source>
</reference>
<protein>
    <recommendedName>
        <fullName>Phosphatidylinositol transfer protein 2</fullName>
        <shortName>PtdIns transfer protein 2</shortName>
    </recommendedName>
    <alternativeName>
        <fullName>DdPITP2</fullName>
    </alternativeName>
</protein>
<accession>Q9NCL7</accession>
<accession>Q555Z4</accession>
<accession>Q86A75</accession>
<accession>Q86A76</accession>
<name>PITP2_DICDI</name>
<proteinExistence type="evidence at transcript level"/>
<organism>
    <name type="scientific">Dictyostelium discoideum</name>
    <name type="common">Social amoeba</name>
    <dbReference type="NCBI Taxonomy" id="44689"/>
    <lineage>
        <taxon>Eukaryota</taxon>
        <taxon>Amoebozoa</taxon>
        <taxon>Evosea</taxon>
        <taxon>Eumycetozoa</taxon>
        <taxon>Dictyostelia</taxon>
        <taxon>Dictyosteliales</taxon>
        <taxon>Dictyosteliaceae</taxon>
        <taxon>Dictyostelium</taxon>
    </lineage>
</organism>
<sequence length="259" mass="30006">MLIKEYRMVLPLTVEEYQIAQLYMVAKKSKESTKGGEGIEIIKNEPFDNEKGKGQYTEKIIYLANSLPRFAAAILPSSALKIEEKAWNAYPYCKTEYSCPFFGEKLVLSIESMHLPGRGEVENALKCDAETLKQRHVDFIDIANDQPKEYIKEEDPKIFKSVKTERGPLDDPKWRDKVEPVMTCYKLVHAEFKYWGFQTKVENVIQDTGVRDVLLKAHRALFCWIDEWFGLTIEDIRKIEEETKAELAKKLEENKAANK</sequence>